<gene>
    <name type="primary">ATN1</name>
    <name type="synonym">D12S755E</name>
    <name type="synonym">DRPLA</name>
</gene>
<reference key="1">
    <citation type="journal article" date="1994" name="Nat. Genet.">
        <title>Structure and expression of the gene responsible for the triplet repeat disorder, dentatorubral and pallidoluysian atrophy (DRPLA).</title>
        <authorList>
            <person name="Nagafuchi S."/>
            <person name="Yanagisawa H."/>
            <person name="Ohsaki E."/>
            <person name="Shirayama T."/>
            <person name="Tadokoro K."/>
            <person name="Inoue T."/>
            <person name="Yamada M."/>
        </authorList>
    </citation>
    <scope>NUCLEOTIDE SEQUENCE [MRNA]</scope>
    <scope>TISSUE SPECIFICITY</scope>
    <scope>VARIANT 484-GLN--GLN-488 DEL</scope>
    <scope>INVOLVEMENT IN DRPLA</scope>
    <source>
        <tissue>Brain</tissue>
    </source>
</reference>
<reference key="2">
    <citation type="journal article" date="1995" name="Am. J. Hum. Genet.">
        <title>Molecular cloning of a full-length cDNA for dentatorubral-pallidoluysian atrophy and regional expressions of the expanded alleles in the CNS.</title>
        <authorList>
            <person name="Onodera O."/>
            <person name="Oyake M."/>
            <person name="Takano H."/>
            <person name="Ikeuchi T."/>
            <person name="Igarashi S."/>
            <person name="Tsuji S."/>
        </authorList>
    </citation>
    <scope>NUCLEOTIDE SEQUENCE [MRNA]</scope>
    <scope>TISSUE SPECIFICITY</scope>
    <scope>VARIANT 484-GLN--GLN-488 DEL</scope>
    <source>
        <tissue>Brain</tissue>
    </source>
</reference>
<reference key="3">
    <citation type="journal article" date="1996" name="Brain Res. Mol. Brain Res.">
        <title>DRPLA gene (atrophin-1) sequence and mRNA expression in human brain.</title>
        <authorList>
            <person name="Margolis R.L."/>
            <person name="Li S.-H."/>
            <person name="Young W.S."/>
            <person name="Wagster M.V."/>
            <person name="Stine O.C."/>
            <person name="Kidwai A.S."/>
            <person name="Ashworth R.G."/>
            <person name="Ross C.A."/>
        </authorList>
    </citation>
    <scope>NUCLEOTIDE SEQUENCE [MRNA]</scope>
    <scope>TISSUE SPECIFICITY</scope>
    <scope>VARIANTS ILE-339 AND 484-GLN--GLN-488 DEL</scope>
</reference>
<reference key="4">
    <citation type="journal article" date="1997" name="Genome Res.">
        <title>Large-scale sequencing in human chromosome 12p13: experimental and computational gene structure determination.</title>
        <authorList>
            <person name="Ansari-Lari M.A."/>
            <person name="Shen Y."/>
            <person name="Muzny D.M."/>
            <person name="Lee W."/>
            <person name="Gibbs R.A."/>
        </authorList>
    </citation>
    <scope>NUCLEOTIDE SEQUENCE [GENOMIC DNA]</scope>
    <scope>POLYMORPHISM OF POLY-GLN REGION</scope>
    <source>
        <tissue>Brain</tissue>
    </source>
</reference>
<reference key="5">
    <citation type="journal article" date="1996" name="Hum. Mol. Genet.">
        <title>A unique origin and multistep process for the generation of expanded DRPLA triplet repeats.</title>
        <authorList>
            <person name="Yanagisawa H."/>
            <person name="Fujii K."/>
            <person name="Nagafuchi S."/>
            <person name="Nakahori Y."/>
            <person name="Nakagome Y."/>
            <person name="Akane A."/>
            <person name="Nakamura M."/>
            <person name="Sano A."/>
            <person name="Komure O."/>
            <person name="Kondo I."/>
            <person name="Jin D.K."/>
            <person name="Soerensen S.A."/>
            <person name="Potter N.T."/>
            <person name="Young S.R."/>
            <person name="Nakamura K."/>
            <person name="Nukina N."/>
            <person name="Nagao Y."/>
            <person name="Tadokoro K."/>
            <person name="Okuyama T."/>
            <person name="Miyashita T."/>
            <person name="Inoue T."/>
            <person name="Kanazawa I."/>
            <person name="Yamada M."/>
        </authorList>
    </citation>
    <scope>NUCLEOTIDE SEQUENCE [MRNA] OF 1-76</scope>
</reference>
<reference key="6">
    <citation type="journal article" date="1994" name="Nat. Genet.">
        <title>Unstable expansion of CAG repeat in hereditary dentatorubral-pallidoluysian atrophy (DRPLA).</title>
        <authorList>
            <person name="Koide R."/>
            <person name="Ikeuchi T."/>
            <person name="Onodera O."/>
            <person name="Tanaka H."/>
            <person name="Igarashi S."/>
            <person name="Endo K."/>
            <person name="Takahashi H."/>
            <person name="Kondo R."/>
            <person name="Ishikawa A."/>
            <person name="Hayashi T."/>
        </authorList>
    </citation>
    <scope>INVOLVEMENT IN DRPLA</scope>
</reference>
<reference key="7">
    <citation type="journal article" date="1994" name="Nat. Genet.">
        <title>The Haw River syndrome: dentatorubropallidoluysian atrophy (DRPLA) in an African-American family.</title>
        <authorList>
            <person name="Burke J.R."/>
            <person name="Wingfield M.S."/>
            <person name="Lewis K.E."/>
            <person name="Roses A.D."/>
            <person name="Lee J.E."/>
            <person name="Hulette C."/>
            <person name="Pericak-Vance M.A."/>
            <person name="Vance J.M."/>
        </authorList>
    </citation>
    <scope>INVOLVEMENT IN HRS</scope>
</reference>
<reference key="8">
    <citation type="journal article" date="1997" name="J. Biol. Chem.">
        <title>Dentatorubral pallidoluysian atrophy (DRPLA) protein is cleaved by caspase-3 during apoptosis.</title>
        <authorList>
            <person name="Miyashita T."/>
            <person name="Okamura-Oho Y."/>
            <person name="Mito Y."/>
            <person name="Nagafuchi S."/>
            <person name="Yamada M."/>
        </authorList>
    </citation>
    <scope>PROTEOLYTIC CLEAVAGE BY CASP-3 AT ASP-109</scope>
</reference>
<reference key="9">
    <citation type="journal article" date="1998" name="Mol. Cell. Neurosci.">
        <title>Atrophin-1, the DRPLA gene product, interacts with two families of WW domain-containing proteins.</title>
        <authorList>
            <person name="Wood J.D."/>
            <person name="Yuan J."/>
            <person name="Margolis R.L."/>
            <person name="Colomer V."/>
            <person name="Duan K."/>
            <person name="Kushi J."/>
            <person name="Kaminsky Z."/>
            <person name="Kleiderlein J.J. Jr."/>
            <person name="Sharp A.H."/>
            <person name="Ross C.A."/>
        </authorList>
    </citation>
    <scope>INTERACTION WITH WWP1; WWP2 AND WWP3</scope>
</reference>
<reference key="10">
    <citation type="journal article" date="1999" name="Hum. Mol. Genet.">
        <title>Dentatorubral-pallidoluysian atrophy protein interacts through a proline-rich region near polyglutamine with the SH3 domain of an insulin receptor tyrosine kinase substrate.</title>
        <authorList>
            <person name="Okamura-Oho Y."/>
            <person name="Miyashita T."/>
            <person name="Ohmi K."/>
            <person name="Yamada M."/>
        </authorList>
    </citation>
    <scope>INTERACTION WITH BAIAP2</scope>
    <scope>SUBCELLULAR LOCATION</scope>
</reference>
<reference key="11">
    <citation type="journal article" date="1999" name="J. Biol. Chem.">
        <title>Cleavage of atrophin-1 at caspase site aspartic acid 109 modulates cytotoxicity.</title>
        <authorList>
            <person name="Ellerby L.M."/>
            <person name="Andrusiak R.L."/>
            <person name="Wellington C.L."/>
            <person name="Hackam A.S."/>
            <person name="Propp S.S."/>
            <person name="Wood J.D."/>
            <person name="Sharp A.H."/>
            <person name="Margolis R.L."/>
            <person name="Ross C.A."/>
            <person name="Salvesen G.S."/>
            <person name="Hayden M.R."/>
            <person name="Bredesen D.E."/>
        </authorList>
    </citation>
    <scope>PROTEOLYTIC CLEAVAGE AT ASP-109</scope>
    <scope>FUNCTION</scope>
    <scope>SUBCELLULAR LOCATION</scope>
    <scope>MUTAGENESIS OF ASP-109</scope>
</reference>
<reference key="12">
    <citation type="journal article" date="2000" name="Hum. Mol. Genet.">
        <title>Protein binding of a DRPLA family through arginine-glutamic acid dipeptide repeats is enhanced by extended polyglutamine.</title>
        <authorList>
            <person name="Yanagisawa H."/>
            <person name="Bundo M."/>
            <person name="Miyashita T."/>
            <person name="Okamura-Oho Y."/>
            <person name="Tadokoro K."/>
            <person name="Tokunaga K."/>
            <person name="Yamada M."/>
        </authorList>
    </citation>
    <scope>INTERACTION WITH RERE</scope>
</reference>
<reference key="13">
    <citation type="journal article" date="2000" name="J. Cell Biol.">
        <title>Atrophin-1, the dentato-rubral and pallido-luysian atrophy gene product, interacts with ETO/MTG8 in the nuclear matrix and represses transcription.</title>
        <authorList>
            <person name="Wood J.D."/>
            <person name="Nucifora F.C. Jr."/>
            <person name="Duan K."/>
            <person name="Zhang C."/>
            <person name="Wang J."/>
            <person name="Kim Y."/>
            <person name="Schilling G."/>
            <person name="Sacchi N."/>
            <person name="Liu J.M."/>
            <person name="Ross C.A."/>
        </authorList>
    </citation>
    <scope>INTERACTION WITH MTG8</scope>
    <scope>SUBCELLULAR LOCATION</scope>
    <scope>FUNCTION</scope>
</reference>
<reference key="14">
    <citation type="journal article" date="2003" name="Hum. Mol. Genet.">
        <title>Dentatorubral-pallidoluysian atrophy protein is phosphorylated by c-Jun NH2-terminal kinase.</title>
        <authorList>
            <person name="Okamura-Oho Y."/>
            <person name="Miyashita T."/>
            <person name="Nagao K."/>
            <person name="Shima S."/>
            <person name="Ogata Y."/>
            <person name="Katada T."/>
            <person name="Nishina H."/>
            <person name="Yamada M."/>
        </authorList>
    </citation>
    <scope>PHOSPHORYLATION AT SER-739</scope>
</reference>
<reference key="15">
    <citation type="journal article" date="2003" name="J. Biol. Chem.">
        <title>Nuclear localization of a non-caspase truncation product of atrophin-1, with an expanded polyglutamine repeat, increases cellular toxicity.</title>
        <authorList>
            <person name="Nucifora F.C. Jr."/>
            <person name="Ellerby L.M."/>
            <person name="Wellington C.L."/>
            <person name="Wood J.D."/>
            <person name="Herring W.J."/>
            <person name="Sawa A."/>
            <person name="Hayden M.R."/>
            <person name="Dawson V.L."/>
            <person name="Dawson T.M."/>
            <person name="Ross C.A."/>
        </authorList>
    </citation>
    <scope>PROTEOLYTIC PROCESSING</scope>
    <scope>NUCLEAR LOCALIZATION SIGNAL</scope>
    <scope>NUCLEAR EXPORT SIGNAL</scope>
    <scope>SUBCELLULAR LOCATION</scope>
</reference>
<reference key="16">
    <citation type="journal article" date="2006" name="Cell">
        <title>Global, in vivo, and site-specific phosphorylation dynamics in signaling networks.</title>
        <authorList>
            <person name="Olsen J.V."/>
            <person name="Blagoev B."/>
            <person name="Gnad F."/>
            <person name="Macek B."/>
            <person name="Kumar C."/>
            <person name="Mortensen P."/>
            <person name="Mann M."/>
        </authorList>
    </citation>
    <scope>IDENTIFICATION BY MASS SPECTROMETRY [LARGE SCALE ANALYSIS]</scope>
    <source>
        <tissue>Cervix carcinoma</tissue>
    </source>
</reference>
<reference key="17">
    <citation type="journal article" date="2008" name="Proc. Natl. Acad. Sci. U.S.A.">
        <title>A quantitative atlas of mitotic phosphorylation.</title>
        <authorList>
            <person name="Dephoure N."/>
            <person name="Zhou C."/>
            <person name="Villen J."/>
            <person name="Beausoleil S.A."/>
            <person name="Bakalarski C.E."/>
            <person name="Elledge S.J."/>
            <person name="Gygi S.P."/>
        </authorList>
    </citation>
    <scope>PHOSPHORYLATION [LARGE SCALE ANALYSIS] AT SER-77; SER-79; SER-101; SER-103; SER-107; THR-653; SER-661; SER-746 AND SER-748</scope>
    <scope>IDENTIFICATION BY MASS SPECTROMETRY [LARGE SCALE ANALYSIS]</scope>
    <source>
        <tissue>Cervix carcinoma</tissue>
    </source>
</reference>
<reference key="18">
    <citation type="journal article" date="2009" name="J. Biol. Chem.">
        <title>Atrophin proteins interact with the Fat1 cadherin and regulate migration and orientation in vascular smooth muscle cells.</title>
        <authorList>
            <person name="Hou R."/>
            <person name="Sibinga N.E."/>
        </authorList>
    </citation>
    <scope>INTERACTION WITH FAT1</scope>
</reference>
<reference key="19">
    <citation type="journal article" date="2009" name="Science">
        <title>Lysine acetylation targets protein complexes and co-regulates major cellular functions.</title>
        <authorList>
            <person name="Choudhary C."/>
            <person name="Kumar C."/>
            <person name="Gnad F."/>
            <person name="Nielsen M.L."/>
            <person name="Rehman M."/>
            <person name="Walther T.C."/>
            <person name="Olsen J.V."/>
            <person name="Mann M."/>
        </authorList>
    </citation>
    <scope>ACETYLATION [LARGE SCALE ANALYSIS] AT LYS-641</scope>
    <scope>IDENTIFICATION BY MASS SPECTROMETRY [LARGE SCALE ANALYSIS]</scope>
</reference>
<reference key="20">
    <citation type="journal article" date="2010" name="FEBS J.">
        <title>Proteolytic processing regulates pathological accumulation in dentatorubral-pallidoluysian atrophy.</title>
        <authorList>
            <person name="Suzuki Y."/>
            <person name="Nakayama K."/>
            <person name="Hashimoto N."/>
            <person name="Yazawa I."/>
        </authorList>
    </citation>
    <scope>PROTEOLYTIC PROCESSING</scope>
    <scope>SUBCELLULAR LOCATION</scope>
</reference>
<reference key="21">
    <citation type="journal article" date="2010" name="J. Biol. Chem.">
        <title>Y65C missense mutation in the WW domain of the Golabi-Ito-Hall syndrome protein PQBP1 affects its binding activity and deregulates pre-mRNA splicing.</title>
        <authorList>
            <person name="Tapia V.E."/>
            <person name="Nicolaescu E."/>
            <person name="McDonald C.B."/>
            <person name="Musi V."/>
            <person name="Oka T."/>
            <person name="Inayoshi Y."/>
            <person name="Satteson A.C."/>
            <person name="Mazack V."/>
            <person name="Humbert J."/>
            <person name="Gaffney C.J."/>
            <person name="Beullens M."/>
            <person name="Schwartz C.E."/>
            <person name="Landgraf C."/>
            <person name="Volkmer R."/>
            <person name="Pastore A."/>
            <person name="Farooq A."/>
            <person name="Bollen M."/>
            <person name="Sudol M."/>
        </authorList>
    </citation>
    <scope>INTERACTION WITH PQBP1</scope>
</reference>
<reference key="22">
    <citation type="journal article" date="2010" name="Sci. Signal.">
        <title>Quantitative phosphoproteomics reveals widespread full phosphorylation site occupancy during mitosis.</title>
        <authorList>
            <person name="Olsen J.V."/>
            <person name="Vermeulen M."/>
            <person name="Santamaria A."/>
            <person name="Kumar C."/>
            <person name="Miller M.L."/>
            <person name="Jensen L.J."/>
            <person name="Gnad F."/>
            <person name="Cox J."/>
            <person name="Jensen T.S."/>
            <person name="Nigg E.A."/>
            <person name="Brunak S."/>
            <person name="Mann M."/>
        </authorList>
    </citation>
    <scope>PHOSPHORYLATION [LARGE SCALE ANALYSIS] AT SER-34</scope>
    <scope>IDENTIFICATION BY MASS SPECTROMETRY [LARGE SCALE ANALYSIS]</scope>
    <source>
        <tissue>Cervix carcinoma</tissue>
    </source>
</reference>
<reference key="23">
    <citation type="journal article" date="2011" name="Sci. Signal.">
        <title>System-wide temporal characterization of the proteome and phosphoproteome of human embryonic stem cell differentiation.</title>
        <authorList>
            <person name="Rigbolt K.T."/>
            <person name="Prokhorova T.A."/>
            <person name="Akimov V."/>
            <person name="Henningsen J."/>
            <person name="Johansen P.T."/>
            <person name="Kratchmarova I."/>
            <person name="Kassem M."/>
            <person name="Mann M."/>
            <person name="Olsen J.V."/>
            <person name="Blagoev B."/>
        </authorList>
    </citation>
    <scope>PHOSPHORYLATION [LARGE SCALE ANALYSIS] AT SER-661</scope>
    <scope>IDENTIFICATION BY MASS SPECTROMETRY [LARGE SCALE ANALYSIS]</scope>
</reference>
<reference key="24">
    <citation type="journal article" date="2013" name="J. Proteome Res.">
        <title>Toward a comprehensive characterization of a human cancer cell phosphoproteome.</title>
        <authorList>
            <person name="Zhou H."/>
            <person name="Di Palma S."/>
            <person name="Preisinger C."/>
            <person name="Peng M."/>
            <person name="Polat A.N."/>
            <person name="Heck A.J."/>
            <person name="Mohammed S."/>
        </authorList>
    </citation>
    <scope>PHOSPHORYLATION [LARGE SCALE ANALYSIS] AT SER-77; SER-632; SER-661; THR-669 AND SER-896</scope>
    <scope>IDENTIFICATION BY MASS SPECTROMETRY [LARGE SCALE ANALYSIS]</scope>
    <source>
        <tissue>Cervix carcinoma</tissue>
        <tissue>Erythroleukemia</tissue>
    </source>
</reference>
<reference key="25">
    <citation type="journal article" date="2014" name="J. Proteomics">
        <title>An enzyme assisted RP-RPLC approach for in-depth analysis of human liver phosphoproteome.</title>
        <authorList>
            <person name="Bian Y."/>
            <person name="Song C."/>
            <person name="Cheng K."/>
            <person name="Dong M."/>
            <person name="Wang F."/>
            <person name="Huang J."/>
            <person name="Sun D."/>
            <person name="Wang L."/>
            <person name="Ye M."/>
            <person name="Zou H."/>
        </authorList>
    </citation>
    <scope>PHOSPHORYLATION [LARGE SCALE ANALYSIS] AT SER-101</scope>
    <scope>IDENTIFICATION BY MASS SPECTROMETRY [LARGE SCALE ANALYSIS]</scope>
    <source>
        <tissue>Liver</tissue>
    </source>
</reference>
<reference key="26">
    <citation type="journal article" date="2017" name="Nat. Struct. Mol. Biol.">
        <title>Site-specific mapping of the human SUMO proteome reveals co-modification with phosphorylation.</title>
        <authorList>
            <person name="Hendriks I.A."/>
            <person name="Lyon D."/>
            <person name="Young C."/>
            <person name="Jensen L.J."/>
            <person name="Vertegaal A.C."/>
            <person name="Nielsen M.L."/>
        </authorList>
    </citation>
    <scope>SUMOYLATION [LARGE SCALE ANALYSIS] AT LYS-1183</scope>
    <scope>IDENTIFICATION BY MASS SPECTROMETRY [LARGE SCALE ANALYSIS]</scope>
</reference>
<reference key="27">
    <citation type="journal article" date="2019" name="Am. J. Hum. Genet.">
        <title>De novo variants disrupting the HX repeat motif of ATN1 cause a recognizable non-progressive neurocognitive syndrome.</title>
        <authorList>
            <person name="Palmer E.E."/>
            <person name="Hong S."/>
            <person name="Al Zahrani F."/>
            <person name="Hashem M.O."/>
            <person name="Aleisa F.A."/>
            <person name="Ahmed H.M.J."/>
            <person name="Kandula T."/>
            <person name="Macintosh R."/>
            <person name="Minoche A.E."/>
            <person name="Puttick C."/>
            <person name="Gayevskiy V."/>
            <person name="Drew A.P."/>
            <person name="Cowley M.J."/>
            <person name="Dinger M."/>
            <person name="Rosenfeld J.A."/>
            <person name="Xiao R."/>
            <person name="Cho M.T."/>
            <person name="Yakubu S.F."/>
            <person name="Henderson L.B."/>
            <person name="Guillen Sacoto M.J."/>
            <person name="Begtrup A."/>
            <person name="Hamad M."/>
            <person name="Shinawi M."/>
            <person name="Andrews M.V."/>
            <person name="Jones M.C."/>
            <person name="Lindstrom K."/>
            <person name="Bristol R.E."/>
            <person name="Kayani S."/>
            <person name="Snyder M."/>
            <person name="Villanueva M.M."/>
            <person name="Schteinschnaider A."/>
            <person name="Faivre L."/>
            <person name="Thauvin C."/>
            <person name="Vitobello A."/>
            <person name="Roscioli T."/>
            <person name="Kirk E.P."/>
            <person name="Bye A."/>
            <person name="Merzaban J."/>
            <person name="Jaremko L."/>
            <person name="Jaremko M."/>
            <person name="Sachdev R.K."/>
            <person name="Alkuraya F.S."/>
            <person name="Arold S.T."/>
        </authorList>
    </citation>
    <scope>INVOLVEMENT IN CHEDDA</scope>
    <scope>VARIANTS CHEDDA ASN-1054; TYR-1058; 1059-SER-HIS-1060 DELINS ASN-LEU; 1059-SER-HIS-1060 DELINS ASP-LEU; TYR-1060; ARG-1062; ASP-1062 AND ARG-1063</scope>
    <scope>CHARACTERIZATION OF VARIANT CHEDDA TYR-1060</scope>
    <scope>REGION</scope>
</reference>
<evidence type="ECO:0000250" key="1"/>
<evidence type="ECO:0000250" key="2">
    <source>
        <dbReference type="UniProtKB" id="O35126"/>
    </source>
</evidence>
<evidence type="ECO:0000250" key="3">
    <source>
        <dbReference type="UniProtKB" id="P54258"/>
    </source>
</evidence>
<evidence type="ECO:0000256" key="4">
    <source>
        <dbReference type="SAM" id="MobiDB-lite"/>
    </source>
</evidence>
<evidence type="ECO:0000269" key="5">
    <source>
    </source>
</evidence>
<evidence type="ECO:0000269" key="6">
    <source>
    </source>
</evidence>
<evidence type="ECO:0000269" key="7">
    <source>
    </source>
</evidence>
<evidence type="ECO:0000269" key="8">
    <source>
    </source>
</evidence>
<evidence type="ECO:0000269" key="9">
    <source>
    </source>
</evidence>
<evidence type="ECO:0000269" key="10">
    <source>
    </source>
</evidence>
<evidence type="ECO:0000269" key="11">
    <source>
    </source>
</evidence>
<evidence type="ECO:0000269" key="12">
    <source>
    </source>
</evidence>
<evidence type="ECO:0000269" key="13">
    <source>
    </source>
</evidence>
<evidence type="ECO:0000269" key="14">
    <source>
    </source>
</evidence>
<evidence type="ECO:0000269" key="15">
    <source>
    </source>
</evidence>
<evidence type="ECO:0000269" key="16">
    <source>
    </source>
</evidence>
<evidence type="ECO:0000269" key="17">
    <source>
    </source>
</evidence>
<evidence type="ECO:0000269" key="18">
    <source>
    </source>
</evidence>
<evidence type="ECO:0000269" key="19">
    <source>
    </source>
</evidence>
<evidence type="ECO:0000269" key="20">
    <source>
    </source>
</evidence>
<evidence type="ECO:0000269" key="21">
    <source>
    </source>
</evidence>
<evidence type="ECO:0000305" key="22"/>
<evidence type="ECO:0007744" key="23">
    <source>
    </source>
</evidence>
<evidence type="ECO:0007744" key="24">
    <source>
    </source>
</evidence>
<evidence type="ECO:0007744" key="25">
    <source>
    </source>
</evidence>
<evidence type="ECO:0007744" key="26">
    <source>
    </source>
</evidence>
<evidence type="ECO:0007744" key="27">
    <source>
    </source>
</evidence>
<evidence type="ECO:0007744" key="28">
    <source>
    </source>
</evidence>
<evidence type="ECO:0007744" key="29">
    <source>
    </source>
</evidence>
<dbReference type="EMBL" id="D31840">
    <property type="protein sequence ID" value="BAA06626.1"/>
    <property type="molecule type" value="mRNA"/>
</dbReference>
<dbReference type="EMBL" id="D38529">
    <property type="protein sequence ID" value="BAA07534.1"/>
    <property type="status" value="ALT_FRAME"/>
    <property type="molecule type" value="mRNA"/>
</dbReference>
<dbReference type="EMBL" id="U23851">
    <property type="protein sequence ID" value="AAB50276.1"/>
    <property type="molecule type" value="mRNA"/>
</dbReference>
<dbReference type="EMBL" id="U47924">
    <property type="protein sequence ID" value="AAB51321.1"/>
    <property type="molecule type" value="Genomic_DNA"/>
</dbReference>
<dbReference type="EMBL" id="D63808">
    <property type="protein sequence ID" value="BAA23631.1"/>
    <property type="molecule type" value="Genomic_DNA"/>
</dbReference>
<dbReference type="CCDS" id="CCDS31734.1"/>
<dbReference type="PIR" id="G01763">
    <property type="entry name" value="G01763"/>
</dbReference>
<dbReference type="PIR" id="S50832">
    <property type="entry name" value="S50832"/>
</dbReference>
<dbReference type="RefSeq" id="NP_001007027.1">
    <property type="nucleotide sequence ID" value="NM_001007026.2"/>
</dbReference>
<dbReference type="RefSeq" id="NP_001411105.1">
    <property type="nucleotide sequence ID" value="NM_001424176.1"/>
</dbReference>
<dbReference type="RefSeq" id="NP_001411106.1">
    <property type="nucleotide sequence ID" value="NM_001424177.1"/>
</dbReference>
<dbReference type="RefSeq" id="NP_001411107.1">
    <property type="nucleotide sequence ID" value="NM_001424178.1"/>
</dbReference>
<dbReference type="RefSeq" id="NP_001931.2">
    <property type="nucleotide sequence ID" value="NM_001940.4"/>
</dbReference>
<dbReference type="SMR" id="P54259"/>
<dbReference type="BioGRID" id="108156">
    <property type="interactions" value="183"/>
</dbReference>
<dbReference type="DIP" id="DIP-29423N"/>
<dbReference type="FunCoup" id="P54259">
    <property type="interactions" value="2197"/>
</dbReference>
<dbReference type="IntAct" id="P54259">
    <property type="interactions" value="106"/>
</dbReference>
<dbReference type="MINT" id="P54259"/>
<dbReference type="STRING" id="9606.ENSP00000379915"/>
<dbReference type="GlyCosmos" id="P54259">
    <property type="glycosylation" value="1 site, 1 glycan"/>
</dbReference>
<dbReference type="GlyGen" id="P54259">
    <property type="glycosylation" value="3 sites, 1 O-linked glycan (3 sites)"/>
</dbReference>
<dbReference type="iPTMnet" id="P54259"/>
<dbReference type="PhosphoSitePlus" id="P54259"/>
<dbReference type="BioMuta" id="ATN1"/>
<dbReference type="DMDM" id="317373480"/>
<dbReference type="jPOST" id="P54259"/>
<dbReference type="MassIVE" id="P54259"/>
<dbReference type="PaxDb" id="9606-ENSP00000349076"/>
<dbReference type="PeptideAtlas" id="P54259"/>
<dbReference type="ProteomicsDB" id="56663"/>
<dbReference type="Pumba" id="P54259"/>
<dbReference type="Antibodypedia" id="22787">
    <property type="antibodies" value="154 antibodies from 28 providers"/>
</dbReference>
<dbReference type="DNASU" id="1822"/>
<dbReference type="Ensembl" id="ENST00000356654.8">
    <property type="protein sequence ID" value="ENSP00000349076.3"/>
    <property type="gene ID" value="ENSG00000111676.15"/>
</dbReference>
<dbReference type="Ensembl" id="ENST00000396684.3">
    <property type="protein sequence ID" value="ENSP00000379915.2"/>
    <property type="gene ID" value="ENSG00000111676.15"/>
</dbReference>
<dbReference type="GeneID" id="1822"/>
<dbReference type="KEGG" id="hsa:1822"/>
<dbReference type="MANE-Select" id="ENST00000396684.3">
    <property type="protein sequence ID" value="ENSP00000379915.2"/>
    <property type="RefSeq nucleotide sequence ID" value="NM_001940.4"/>
    <property type="RefSeq protein sequence ID" value="NP_001931.2"/>
</dbReference>
<dbReference type="UCSC" id="uc001qrw.2">
    <property type="organism name" value="human"/>
</dbReference>
<dbReference type="AGR" id="HGNC:3033"/>
<dbReference type="CTD" id="1822"/>
<dbReference type="DisGeNET" id="1822"/>
<dbReference type="GeneCards" id="ATN1"/>
<dbReference type="GeneReviews" id="ATN1"/>
<dbReference type="HGNC" id="HGNC:3033">
    <property type="gene designation" value="ATN1"/>
</dbReference>
<dbReference type="HPA" id="ENSG00000111676">
    <property type="expression patterns" value="Low tissue specificity"/>
</dbReference>
<dbReference type="MalaCards" id="ATN1"/>
<dbReference type="MIM" id="125370">
    <property type="type" value="phenotype"/>
</dbReference>
<dbReference type="MIM" id="607462">
    <property type="type" value="gene"/>
</dbReference>
<dbReference type="MIM" id="618494">
    <property type="type" value="phenotype"/>
</dbReference>
<dbReference type="neXtProt" id="NX_P54259"/>
<dbReference type="OpenTargets" id="ENSG00000111676"/>
<dbReference type="Orphanet" id="101">
    <property type="disease" value="Dentatorubral pallidoluysian atrophy"/>
</dbReference>
<dbReference type="PharmGKB" id="PA27487"/>
<dbReference type="VEuPathDB" id="HostDB:ENSG00000111676"/>
<dbReference type="eggNOG" id="KOG2133">
    <property type="taxonomic scope" value="Eukaryota"/>
</dbReference>
<dbReference type="GeneTree" id="ENSGT00940000153615"/>
<dbReference type="HOGENOM" id="CLU_005292_0_0_1"/>
<dbReference type="InParanoid" id="P54259"/>
<dbReference type="OMA" id="QDAIHAX"/>
<dbReference type="OrthoDB" id="6147534at2759"/>
<dbReference type="PAN-GO" id="P54259">
    <property type="GO annotations" value="2 GO annotations based on evolutionary models"/>
</dbReference>
<dbReference type="PhylomeDB" id="P54259"/>
<dbReference type="TreeFam" id="TF328554"/>
<dbReference type="PathwayCommons" id="P54259"/>
<dbReference type="Reactome" id="R-HSA-8943724">
    <property type="pathway name" value="Regulation of PTEN gene transcription"/>
</dbReference>
<dbReference type="SignaLink" id="P54259"/>
<dbReference type="SIGNOR" id="P54259"/>
<dbReference type="BioGRID-ORCS" id="1822">
    <property type="hits" value="33 hits in 1157 CRISPR screens"/>
</dbReference>
<dbReference type="ChiTaRS" id="ATN1">
    <property type="organism name" value="human"/>
</dbReference>
<dbReference type="GeneWiki" id="ATN1"/>
<dbReference type="GenomeRNAi" id="1822"/>
<dbReference type="Pharos" id="P54259">
    <property type="development level" value="Tbio"/>
</dbReference>
<dbReference type="PRO" id="PR:P54259"/>
<dbReference type="Proteomes" id="UP000005640">
    <property type="component" value="Chromosome 12"/>
</dbReference>
<dbReference type="RNAct" id="P54259">
    <property type="molecule type" value="protein"/>
</dbReference>
<dbReference type="Bgee" id="ENSG00000111676">
    <property type="expression patterns" value="Expressed in right hemisphere of cerebellum and 150 other cell types or tissues"/>
</dbReference>
<dbReference type="GO" id="GO:0070161">
    <property type="term" value="C:anchoring junction"/>
    <property type="evidence" value="ECO:0007669"/>
    <property type="project" value="UniProtKB-SubCell"/>
</dbReference>
<dbReference type="GO" id="GO:0005737">
    <property type="term" value="C:cytoplasm"/>
    <property type="evidence" value="ECO:0000304"/>
    <property type="project" value="ProtInc"/>
</dbReference>
<dbReference type="GO" id="GO:0016363">
    <property type="term" value="C:nuclear matrix"/>
    <property type="evidence" value="ECO:0000314"/>
    <property type="project" value="UniProtKB"/>
</dbReference>
<dbReference type="GO" id="GO:0005654">
    <property type="term" value="C:nucleoplasm"/>
    <property type="evidence" value="ECO:0000314"/>
    <property type="project" value="HPA"/>
</dbReference>
<dbReference type="GO" id="GO:0005634">
    <property type="term" value="C:nucleus"/>
    <property type="evidence" value="ECO:0000314"/>
    <property type="project" value="UniProtKB"/>
</dbReference>
<dbReference type="GO" id="GO:0048471">
    <property type="term" value="C:perinuclear region of cytoplasm"/>
    <property type="evidence" value="ECO:0007669"/>
    <property type="project" value="UniProtKB-SubCell"/>
</dbReference>
<dbReference type="GO" id="GO:0019904">
    <property type="term" value="F:protein domain specific binding"/>
    <property type="evidence" value="ECO:0000353"/>
    <property type="project" value="UniProtKB"/>
</dbReference>
<dbReference type="GO" id="GO:0003713">
    <property type="term" value="F:transcription coactivator activity"/>
    <property type="evidence" value="ECO:0007669"/>
    <property type="project" value="Ensembl"/>
</dbReference>
<dbReference type="GO" id="GO:0003714">
    <property type="term" value="F:transcription corepressor activity"/>
    <property type="evidence" value="ECO:0000314"/>
    <property type="project" value="UniProtKB"/>
</dbReference>
<dbReference type="GO" id="GO:0001906">
    <property type="term" value="P:cell killing"/>
    <property type="evidence" value="ECO:0007669"/>
    <property type="project" value="Ensembl"/>
</dbReference>
<dbReference type="GO" id="GO:0016477">
    <property type="term" value="P:cell migration"/>
    <property type="evidence" value="ECO:0007669"/>
    <property type="project" value="Ensembl"/>
</dbReference>
<dbReference type="GO" id="GO:0007417">
    <property type="term" value="P:central nervous system development"/>
    <property type="evidence" value="ECO:0000304"/>
    <property type="project" value="ProtInc"/>
</dbReference>
<dbReference type="GO" id="GO:0008340">
    <property type="term" value="P:determination of adult lifespan"/>
    <property type="evidence" value="ECO:0007669"/>
    <property type="project" value="Ensembl"/>
</dbReference>
<dbReference type="GO" id="GO:0030011">
    <property type="term" value="P:maintenance of cell polarity"/>
    <property type="evidence" value="ECO:0007669"/>
    <property type="project" value="Ensembl"/>
</dbReference>
<dbReference type="GO" id="GO:0008584">
    <property type="term" value="P:male gonad development"/>
    <property type="evidence" value="ECO:0007669"/>
    <property type="project" value="Ensembl"/>
</dbReference>
<dbReference type="GO" id="GO:0035264">
    <property type="term" value="P:multicellular organism growth"/>
    <property type="evidence" value="ECO:0007669"/>
    <property type="project" value="Ensembl"/>
</dbReference>
<dbReference type="GO" id="GO:0000122">
    <property type="term" value="P:negative regulation of transcription by RNA polymerase II"/>
    <property type="evidence" value="ECO:0000314"/>
    <property type="project" value="UniProtKB"/>
</dbReference>
<dbReference type="GO" id="GO:0051402">
    <property type="term" value="P:neuron apoptotic process"/>
    <property type="evidence" value="ECO:0000314"/>
    <property type="project" value="UniProtKB"/>
</dbReference>
<dbReference type="GO" id="GO:0009791">
    <property type="term" value="P:post-embryonic development"/>
    <property type="evidence" value="ECO:0007669"/>
    <property type="project" value="Ensembl"/>
</dbReference>
<dbReference type="GO" id="GO:0032094">
    <property type="term" value="P:response to food"/>
    <property type="evidence" value="ECO:0007669"/>
    <property type="project" value="Ensembl"/>
</dbReference>
<dbReference type="GO" id="GO:0007283">
    <property type="term" value="P:spermatogenesis"/>
    <property type="evidence" value="ECO:0007669"/>
    <property type="project" value="Ensembl"/>
</dbReference>
<dbReference type="InterPro" id="IPR017993">
    <property type="entry name" value="Atrophin-1"/>
</dbReference>
<dbReference type="InterPro" id="IPR002951">
    <property type="entry name" value="Atrophin-like"/>
</dbReference>
<dbReference type="PANTHER" id="PTHR13859:SF9">
    <property type="entry name" value="ATROPHIN-1"/>
    <property type="match status" value="1"/>
</dbReference>
<dbReference type="PANTHER" id="PTHR13859">
    <property type="entry name" value="ATROPHIN-RELATED"/>
    <property type="match status" value="1"/>
</dbReference>
<dbReference type="Pfam" id="PF03154">
    <property type="entry name" value="Atrophin-1"/>
    <property type="match status" value="2"/>
</dbReference>
<dbReference type="PRINTS" id="PR01222">
    <property type="entry name" value="ATROPHIN"/>
</dbReference>
<name>ATN1_HUMAN</name>
<protein>
    <recommendedName>
        <fullName>Atrophin-1</fullName>
    </recommendedName>
    <alternativeName>
        <fullName>Dentatorubral-pallidoluysian atrophy protein</fullName>
    </alternativeName>
</protein>
<organism>
    <name type="scientific">Homo sapiens</name>
    <name type="common">Human</name>
    <dbReference type="NCBI Taxonomy" id="9606"/>
    <lineage>
        <taxon>Eukaryota</taxon>
        <taxon>Metazoa</taxon>
        <taxon>Chordata</taxon>
        <taxon>Craniata</taxon>
        <taxon>Vertebrata</taxon>
        <taxon>Euteleostomi</taxon>
        <taxon>Mammalia</taxon>
        <taxon>Eutheria</taxon>
        <taxon>Euarchontoglires</taxon>
        <taxon>Primates</taxon>
        <taxon>Haplorrhini</taxon>
        <taxon>Catarrhini</taxon>
        <taxon>Hominidae</taxon>
        <taxon>Homo</taxon>
    </lineage>
</organism>
<comment type="function">
    <text evidence="2 5 8">Transcriptional corepressor. Recruits NR2E1 to repress transcription. Promotes vascular smooth cell (VSMC) migration and orientation (By similarity). Corepressor of MTG8 transcriptional repression. Has some intrinsic repression activity which is independent of the number of poly-Gln (polyQ) repeats.</text>
</comment>
<comment type="subunit">
    <text evidence="2 6 7 8 11 12 21">Interacts with NR2E1; the interaction represses the transcriptional activity of NR2E1. Interacts (via its N-terminus) with FAT1 (via a C-terminal domain) (By similarity). Interacts with BAIAP2, WWP1, WWP2, WWP3 and RERE. Interacts (via its N-terminus) with MTG8; the interaction enhances transcriptional repression of MTG8. Interacts with PQBP1.</text>
</comment>
<comment type="interaction">
    <interactant intactId="EBI-945980">
        <id>P54259</id>
    </interactant>
    <interactant intactId="EBI-536772">
        <id>Q12805</id>
        <label>EFEMP1</label>
    </interactant>
    <organismsDiffer>false</organismsDiffer>
    <experiments>3</experiments>
</comment>
<comment type="interaction">
    <interactant intactId="EBI-945980">
        <id>P54259</id>
    </interactant>
    <interactant intactId="EBI-743414">
        <id>O95967</id>
        <label>EFEMP2</label>
    </interactant>
    <organismsDiffer>false</organismsDiffer>
    <experiments>3</experiments>
</comment>
<comment type="interaction">
    <interactant intactId="EBI-945980">
        <id>P54259</id>
    </interactant>
    <interactant intactId="EBI-945934">
        <id>Q9HAU0</id>
        <label>PLEKHA5</label>
    </interactant>
    <organismsDiffer>false</organismsDiffer>
    <experiments>2</experiments>
</comment>
<comment type="interaction">
    <interactant intactId="EBI-945980">
        <id>P54259</id>
    </interactant>
    <interactant intactId="EBI-355546">
        <id>P61289</id>
        <label>PSME3</label>
    </interactant>
    <organismsDiffer>false</organismsDiffer>
    <experiments>3</experiments>
</comment>
<comment type="interaction">
    <interactant intactId="EBI-945980">
        <id>P54259</id>
    </interactant>
    <interactant intactId="EBI-945906">
        <id>Q9NWB1</id>
        <label>RBFOX1</label>
    </interactant>
    <organismsDiffer>false</organismsDiffer>
    <experiments>2</experiments>
</comment>
<comment type="interaction">
    <interactant intactId="EBI-945980">
        <id>P54259</id>
    </interactant>
    <interactant intactId="EBI-948076">
        <id>Q9P2R6</id>
        <label>RERE</label>
    </interactant>
    <organismsDiffer>false</organismsDiffer>
    <experiments>3</experiments>
</comment>
<comment type="interaction">
    <interactant intactId="EBI-945980">
        <id>P54259</id>
    </interactant>
    <interactant intactId="EBI-742327">
        <id>Q15654</id>
        <label>TRIP6</label>
    </interactant>
    <organismsDiffer>false</organismsDiffer>
    <experiments>2</experiments>
</comment>
<comment type="interaction">
    <interactant intactId="EBI-945980">
        <id>P54259</id>
    </interactant>
    <interactant intactId="EBI-540834">
        <id>P61964</id>
        <label>WDR5</label>
    </interactant>
    <organismsDiffer>false</organismsDiffer>
    <experiments>6</experiments>
</comment>
<comment type="subcellular location">
    <subcellularLocation>
        <location>Nucleus</location>
    </subcellularLocation>
    <subcellularLocation>
        <location>Cytoplasm</location>
        <location>Perinuclear region</location>
    </subcellularLocation>
    <subcellularLocation>
        <location evidence="3">Cell junction</location>
    </subcellularLocation>
    <text evidence="1">Shuttles between nucleus and cytoplasm. Colocalizes with FAT1 in the perinuclear area, at cell-cell junctions and leading edges of cells (By similarity). Colocalizes with MTG8 in discrete nuclear dots. Proteolytic fragment F1 appears to remain in nucleus. Fragment F2 is exported into the cytoplasm. Fragment F2 from mutant sequences with longer poly-Gln (polyQ) tracts are additionally located to the cytoplasmic membrane and to certain organelles.</text>
</comment>
<comment type="tissue specificity">
    <text evidence="15 16 19">Widely expressed in various tissues including heart, lung, kidney, ovary, testis, prostate, placenta, skeletal Low levels in the liver, thymus and leukocytes. In the adult brain, broadly expressed in amygdala, caudate nucleus, corpus callosum, hippocampus, hypothalamus, substantia nigra, subthalamic nucleus, and thalamus. High levels in fetal tissues, especially brain.</text>
</comment>
<comment type="domain">
    <text evidence="14">The HX repeat motif is a specific pH-dependent interaction motif for ions and/or proteins or other biomolecules. This motif could be involved in the control of embryonic development.</text>
</comment>
<comment type="PTM">
    <text evidence="10">Phosphorylated in vitro by MAPK8/JNK1 on Ser-739. Mutant ATN1 sequences with expanded poly-Gln (polyQ) traits are more slowly phosphorylated.</text>
</comment>
<comment type="PTM">
    <text evidence="5 9 13 20">Proteolytically cleaved, probably in the nucleus, to produce two C-terminal fragments of 140 kDa (F1) and 125 kDa (F2) each containing poly-Gln (polyQ) tracts. F2 is produced by cleavage by caspases and is exported into the cytoplasm. In vitro, cleavage increases with an increase in the number of polyQ tracts. C-terminal proteolytic products appear to be the cause of cell toxicity. In vitro cleavage at Asp-109.</text>
</comment>
<comment type="polymorphism">
    <text evidence="17">The poly-Gln region of ATN1 is highly polymorphic (7 to 23 repeats) in the normal population and is expanded to about 49-75 repeats in DRPLA and HRS patients. Longer expansions result in earlier onset and more severe clinical manifestations of the disease.</text>
</comment>
<comment type="disease" evidence="16 18">
    <disease id="DI-01476">
        <name>Dentatorubral-pallidoluysian atrophy</name>
        <acronym>DRPLA</acronym>
        <description>Autosomal dominant neurodegenerative disorder characterized by a loss of neurons in the dentate nucleus, rubrum, glogus pallidus and Luys'body. Clinical features are myoclonus epilepsy, dementia, and cerebellar ataxia. Onset of the disease occurs usually in the second decade of life and death in the fourth.</description>
        <dbReference type="MIM" id="125370"/>
    </disease>
    <text>The disease is caused by variants affecting the gene represented in this entry.</text>
</comment>
<comment type="disease" evidence="14">
    <disease id="DI-05610">
        <name>Congenital hypotonia, epilepsy, developmental delay, and digital anomalies</name>
        <acronym>CHEDDA</acronym>
        <description>An autosomal dominant neurodevelopmental syndrome characterized by severe global developmental delay, impaired intellectual development, poor or absent language, significant motor disability with inability to walk, dysmorphic facial features, skeletal anomalies, and variable congenital malformations. Most patients also have seizures and structural brain abnormalities.</description>
        <dbReference type="MIM" id="618494"/>
    </disease>
    <text>The disease is caused by variants affecting the gene represented in this entry.</text>
</comment>
<comment type="sequence caution" evidence="22">
    <conflict type="frameshift">
        <sequence resource="EMBL-CDS" id="BAA07534"/>
    </conflict>
</comment>
<sequence length="1190" mass="125414">MKTRQNKDSMSMRSGRKKEAPGPREELRSRGRASPGGVSTSSSDGKAEKSRQTAKKARVEEASTPKVNKQGRSEEISESESEETNAPKKTKTEQELPRPQSPSDLDSLDGRSLNDDGSSDPRDIDQDNRSTSPSIYSPGSVENDSDSSSGLSQGPARPYHPPPLFPPSPQPPDSTPRQPEASFEPHPSVTPTGYHAPMEPPTSRMFQAPPGAPPPHPQLYPGGTGGVLSGPPMGPKGGGAASSVGGPNGGKQHPPPTTPISVSSSGASGAPPTKPPTTPVGGGNLPSAPPPANFPHVTPNLPPPPALRPLNNASASPPGLGAQPLPGHLPSPHAMGQGMGGLPPGPEKGPTLAPSPHSLPPASSSAPAPPMRFPYSSSSSSSAAASSSSSSSSSSASPFPASQALPSYPHSFPPPTSLSVSNQPPKYTQPSLPSQAVWSQGPPPPPPYGRLLANSNAHPGPFPPSTGAQSTAHPPVSTHHHHHQQQQQQQQQQQQQQQQQQQHHGNSGPPPPGAFPHPLEGGSSHHAHPYAMSPSLGSLRPYPPGPAHLPPPHSQVSYSQAGPNGPPVSSSSNSSSSTSQGSYPCSHPSPSQGPQGAPYPFPPVPTVTTSSATLSTVIATVASSPAGYKTASPPGPPPYGKRAPSPGAYKTATPPGYKPGSPPSFRTGTPPGYRGTSPPAGPGTFKPGSPTVGPGPLPPAGPSGLPSLPPPPAAPASGPPLSATQIKQEPAEEYETPESPVPPARSPSPPPKVVDVPSHASQSARFNKHLDRGFNSCARSDLYFVPLEGSKLAKKRADLVEKVRREAEQRAREEKEREREREREKEREREKERELERSVKLAQEGRAPVECPSLGPVPHRPPFEPGSAVATVPPYLGPDTPALRTLSEYARPHVMSPGNRNHPFYVPLGAVDPGLLGYNVPALYSSDPAAREREREARERDLRDRLKPGFEVKPSELEPLHGVPGPGLDPFPRHGGLALQPGPPGLHPFPFHPSLGPLERERLALAAGPALRPDMSYAERLAAERQHAERVAALGNDPLARLQMLNVTPHHHQHSHIHSHLHLHQQDAIHAASASVHPLIDPLASGSHLTRIPYPAGTLPNPLLPHPLHENEVLRHQLFAAPYRDLPASLSAPMSAAHQLQAMHAQSAELQRLALEQQQWLHAHHPLHSVPLPAQEDYYSHLKKESDKPL</sequence>
<keyword id="KW-0007">Acetylation</keyword>
<keyword id="KW-0965">Cell junction</keyword>
<keyword id="KW-0963">Cytoplasm</keyword>
<keyword id="KW-0225">Disease variant</keyword>
<keyword id="KW-0887">Epilepsy</keyword>
<keyword id="KW-0991">Intellectual disability</keyword>
<keyword id="KW-1017">Isopeptide bond</keyword>
<keyword id="KW-0488">Methylation</keyword>
<keyword id="KW-0523">Neurodegeneration</keyword>
<keyword id="KW-0539">Nucleus</keyword>
<keyword id="KW-0597">Phosphoprotein</keyword>
<keyword id="KW-1267">Proteomics identification</keyword>
<keyword id="KW-1185">Reference proteome</keyword>
<keyword id="KW-0804">Transcription</keyword>
<keyword id="KW-0805">Transcription regulation</keyword>
<keyword id="KW-0818">Triplet repeat expansion</keyword>
<keyword id="KW-0832">Ubl conjugation</keyword>
<feature type="chain" id="PRO_0000064730" description="Atrophin-1">
    <location>
        <begin position="1"/>
        <end position="1190"/>
    </location>
</feature>
<feature type="region of interest" description="Disordered" evidence="4">
    <location>
        <begin position="1"/>
        <end position="608"/>
    </location>
</feature>
<feature type="region of interest" description="Involved in binding BAIAP2">
    <location>
        <begin position="517"/>
        <end position="567"/>
    </location>
</feature>
<feature type="region of interest" description="Disordered" evidence="4">
    <location>
        <begin position="622"/>
        <end position="767"/>
    </location>
</feature>
<feature type="region of interest" description="Disordered" evidence="4">
    <location>
        <begin position="785"/>
        <end position="862"/>
    </location>
</feature>
<feature type="region of interest" description="Required for interaction with FAT1" evidence="11">
    <location>
        <begin position="879"/>
        <end position="894"/>
    </location>
</feature>
<feature type="region of interest" description="HX repeat" evidence="14">
    <location>
        <begin position="1049"/>
        <end position="1065"/>
    </location>
</feature>
<feature type="short sequence motif" description="Nuclear localization signal" evidence="9">
    <location>
        <begin position="16"/>
        <end position="32"/>
    </location>
</feature>
<feature type="short sequence motif" description="Nuclear export signal">
    <location>
        <begin position="1033"/>
        <end position="1041"/>
    </location>
</feature>
<feature type="compositionally biased region" description="Basic and acidic residues" evidence="4">
    <location>
        <begin position="17"/>
        <end position="29"/>
    </location>
</feature>
<feature type="compositionally biased region" description="Basic and acidic residues" evidence="4">
    <location>
        <begin position="45"/>
        <end position="63"/>
    </location>
</feature>
<feature type="compositionally biased region" description="Basic and acidic residues" evidence="4">
    <location>
        <begin position="108"/>
        <end position="128"/>
    </location>
</feature>
<feature type="compositionally biased region" description="Polar residues" evidence="4">
    <location>
        <begin position="129"/>
        <end position="152"/>
    </location>
</feature>
<feature type="compositionally biased region" description="Pro residues" evidence="4">
    <location>
        <begin position="158"/>
        <end position="174"/>
    </location>
</feature>
<feature type="compositionally biased region" description="Low complexity" evidence="4">
    <location>
        <begin position="259"/>
        <end position="271"/>
    </location>
</feature>
<feature type="compositionally biased region" description="Low complexity" evidence="4">
    <location>
        <begin position="350"/>
        <end position="366"/>
    </location>
</feature>
<feature type="compositionally biased region" description="Low complexity" evidence="4">
    <location>
        <begin position="376"/>
        <end position="397"/>
    </location>
</feature>
<feature type="compositionally biased region" description="Polar residues" evidence="4">
    <location>
        <begin position="417"/>
        <end position="438"/>
    </location>
</feature>
<feature type="compositionally biased region" description="Low complexity" evidence="4">
    <location>
        <begin position="485"/>
        <end position="507"/>
    </location>
</feature>
<feature type="compositionally biased region" description="Pro residues" evidence="4">
    <location>
        <begin position="541"/>
        <end position="553"/>
    </location>
</feature>
<feature type="compositionally biased region" description="Low complexity" evidence="4">
    <location>
        <begin position="569"/>
        <end position="586"/>
    </location>
</feature>
<feature type="compositionally biased region" description="Low complexity" evidence="4">
    <location>
        <begin position="622"/>
        <end position="632"/>
    </location>
</feature>
<feature type="compositionally biased region" description="Pro residues" evidence="4">
    <location>
        <begin position="693"/>
        <end position="718"/>
    </location>
</feature>
<feature type="compositionally biased region" description="Pro residues" evidence="4">
    <location>
        <begin position="739"/>
        <end position="752"/>
    </location>
</feature>
<feature type="compositionally biased region" description="Basic and acidic residues" evidence="4">
    <location>
        <begin position="795"/>
        <end position="839"/>
    </location>
</feature>
<feature type="site" description="Cleavage; by CASP-3" evidence="5 20">
    <location>
        <begin position="109"/>
        <end position="110"/>
    </location>
</feature>
<feature type="modified residue" description="Phosphoserine" evidence="25">
    <location>
        <position position="34"/>
    </location>
</feature>
<feature type="modified residue" description="Phosphoserine" evidence="23 27">
    <location>
        <position position="77"/>
    </location>
</feature>
<feature type="modified residue" description="Phosphoserine" evidence="23">
    <location>
        <position position="79"/>
    </location>
</feature>
<feature type="modified residue" description="Phosphoserine" evidence="23 28">
    <location>
        <position position="101"/>
    </location>
</feature>
<feature type="modified residue" description="Phosphoserine" evidence="23">
    <location>
        <position position="103"/>
    </location>
</feature>
<feature type="modified residue" description="Phosphoserine" evidence="23">
    <location>
        <position position="107"/>
    </location>
</feature>
<feature type="modified residue" description="Phosphoserine" evidence="27">
    <location>
        <position position="632"/>
    </location>
</feature>
<feature type="modified residue" description="N6-acetyllysine" evidence="24">
    <location>
        <position position="641"/>
    </location>
</feature>
<feature type="modified residue" description="Phosphothreonine" evidence="23">
    <location>
        <position position="653"/>
    </location>
</feature>
<feature type="modified residue" description="Phosphoserine" evidence="23 26 27">
    <location>
        <position position="661"/>
    </location>
</feature>
<feature type="modified residue" description="Phosphothreonine" evidence="27">
    <location>
        <position position="669"/>
    </location>
</feature>
<feature type="modified residue" description="Phosphoserine; by MAPK8" evidence="10">
    <location>
        <position position="739"/>
    </location>
</feature>
<feature type="modified residue" description="Phosphoserine" evidence="23">
    <location>
        <position position="746"/>
    </location>
</feature>
<feature type="modified residue" description="Phosphoserine" evidence="23">
    <location>
        <position position="748"/>
    </location>
</feature>
<feature type="modified residue" description="Phosphoserine" evidence="27">
    <location>
        <position position="896"/>
    </location>
</feature>
<feature type="modified residue" description="Asymmetric dimethylarginine" evidence="2">
    <location>
        <position position="1115"/>
    </location>
</feature>
<feature type="cross-link" description="Glycyl lysine isopeptide (Lys-Gly) (interchain with G-Cter in SUMO2)" evidence="29">
    <location>
        <position position="1183"/>
    </location>
</feature>
<feature type="sequence variant" id="VAR_030937" description="In dbSNP:rs1058045." evidence="19">
    <original>M</original>
    <variation>I</variation>
    <location>
        <position position="339"/>
    </location>
</feature>
<feature type="sequence variant" id="VAR_064038" evidence="15 16 19">
    <location>
        <begin position="484"/>
        <end position="488"/>
    </location>
</feature>
<feature type="sequence variant" id="VAR_083058" description="In CHEDDA." evidence="14">
    <original>H</original>
    <variation>N</variation>
    <location>
        <position position="1054"/>
    </location>
</feature>
<feature type="sequence variant" id="VAR_083059" description="In CHEDDA." evidence="14">
    <original>H</original>
    <variation>Y</variation>
    <location>
        <position position="1058"/>
    </location>
</feature>
<feature type="sequence variant" id="VAR_083060" description="In CHEDDA; uncertain significance." evidence="14">
    <original>SH</original>
    <variation>DL</variation>
    <location>
        <begin position="1059"/>
        <end position="1060"/>
    </location>
</feature>
<feature type="sequence variant" id="VAR_083061" description="In CHEDDA; uncertain significance." evidence="14">
    <original>SH</original>
    <variation>NL</variation>
    <location>
        <begin position="1059"/>
        <end position="1060"/>
    </location>
</feature>
<feature type="sequence variant" id="VAR_083062" description="In CHEDDA; the mutation resulted in a perturbation of the structural and functional integrity of the HX repeat; altered zinc-binding properties of the HX repeat." evidence="14">
    <original>H</original>
    <variation>Y</variation>
    <location>
        <position position="1060"/>
    </location>
</feature>
<feature type="sequence variant" id="VAR_083063" description="In CHEDDA." evidence="14">
    <original>H</original>
    <variation>D</variation>
    <location>
        <position position="1062"/>
    </location>
</feature>
<feature type="sequence variant" id="VAR_083064" description="In CHEDDA." evidence="14">
    <original>H</original>
    <variation>R</variation>
    <location>
        <position position="1062"/>
    </location>
</feature>
<feature type="sequence variant" id="VAR_083065" description="In CHEDDA." evidence="14">
    <original>L</original>
    <variation>R</variation>
    <location>
        <position position="1063"/>
    </location>
</feature>
<feature type="mutagenesis site" description="Prevents cleavage and suppresses apoptosis." evidence="5">
    <original>D</original>
    <variation>N</variation>
    <location>
        <position position="109"/>
    </location>
</feature>
<feature type="mutagenesis site" description="Abolishes phosphorylation.">
    <original>S</original>
    <variation>A</variation>
    <location>
        <position position="739"/>
    </location>
</feature>
<feature type="sequence conflict" description="In Ref. 3; AAB50276." evidence="22" ref="3">
    <location>
        <position position="94"/>
    </location>
</feature>
<feature type="sequence conflict" description="In Ref. 1; BAA06626." evidence="22" ref="1">
    <original>H</original>
    <variation>Y</variation>
    <location>
        <position position="333"/>
    </location>
</feature>
<feature type="sequence conflict" description="In Ref. 1; BAA06626." evidence="22" ref="1">
    <original>A</original>
    <variation>G</variation>
    <location>
        <position position="1033"/>
    </location>
</feature>
<accession>P54259</accession>
<accession>Q99495</accession>
<accession>Q99621</accession>
<accession>Q9UEK7</accession>
<proteinExistence type="evidence at protein level"/>